<keyword id="KW-0175">Coiled coil</keyword>
<keyword id="KW-0489">Methyltransferase</keyword>
<keyword id="KW-1185">Reference proteome</keyword>
<keyword id="KW-0949">S-adenosyl-L-methionine</keyword>
<keyword id="KW-0808">Transferase</keyword>
<feature type="chain" id="PRO_0000441199" description="O-methyltransferase aclM">
    <location>
        <begin position="1"/>
        <end position="433"/>
    </location>
</feature>
<feature type="coiled-coil region" evidence="1">
    <location>
        <begin position="5"/>
        <end position="37"/>
    </location>
</feature>
<feature type="active site" description="Proton acceptor" evidence="2">
    <location>
        <position position="330"/>
    </location>
</feature>
<feature type="binding site" evidence="2">
    <location>
        <position position="277"/>
    </location>
    <ligand>
        <name>S-adenosyl-L-methionine</name>
        <dbReference type="ChEBI" id="CHEBI:59789"/>
    </ligand>
</feature>
<feature type="binding site" evidence="2">
    <location>
        <begin position="311"/>
        <end position="313"/>
    </location>
    <ligand>
        <name>S-adenosyl-L-methionine</name>
        <dbReference type="ChEBI" id="CHEBI:59789"/>
    </ligand>
</feature>
<dbReference type="EC" id="2.1.1.-" evidence="2"/>
<dbReference type="EMBL" id="BA000050">
    <property type="protein sequence ID" value="BAE56602.1"/>
    <property type="molecule type" value="Genomic_DNA"/>
</dbReference>
<dbReference type="SMR" id="Q2UPB3"/>
<dbReference type="STRING" id="510516.Q2UPB3"/>
<dbReference type="EnsemblFungi" id="BAE56602">
    <property type="protein sequence ID" value="BAE56602"/>
    <property type="gene ID" value="AO090001000039"/>
</dbReference>
<dbReference type="HOGENOM" id="CLU_005533_12_2_1"/>
<dbReference type="OMA" id="MMMTANG"/>
<dbReference type="Proteomes" id="UP000006564">
    <property type="component" value="Chromosome 2"/>
</dbReference>
<dbReference type="GO" id="GO:0008171">
    <property type="term" value="F:O-methyltransferase activity"/>
    <property type="evidence" value="ECO:0007669"/>
    <property type="project" value="InterPro"/>
</dbReference>
<dbReference type="GO" id="GO:0046983">
    <property type="term" value="F:protein dimerization activity"/>
    <property type="evidence" value="ECO:0007669"/>
    <property type="project" value="InterPro"/>
</dbReference>
<dbReference type="GO" id="GO:0032259">
    <property type="term" value="P:methylation"/>
    <property type="evidence" value="ECO:0007669"/>
    <property type="project" value="UniProtKB-KW"/>
</dbReference>
<dbReference type="GO" id="GO:0044550">
    <property type="term" value="P:secondary metabolite biosynthetic process"/>
    <property type="evidence" value="ECO:0007669"/>
    <property type="project" value="UniProtKB-ARBA"/>
</dbReference>
<dbReference type="Gene3D" id="3.40.50.150">
    <property type="entry name" value="Vaccinia Virus protein VP39"/>
    <property type="match status" value="1"/>
</dbReference>
<dbReference type="Gene3D" id="1.10.10.10">
    <property type="entry name" value="Winged helix-like DNA-binding domain superfamily/Winged helix DNA-binding domain"/>
    <property type="match status" value="1"/>
</dbReference>
<dbReference type="InterPro" id="IPR016461">
    <property type="entry name" value="COMT-like"/>
</dbReference>
<dbReference type="InterPro" id="IPR001077">
    <property type="entry name" value="O_MeTrfase_dom"/>
</dbReference>
<dbReference type="InterPro" id="IPR012967">
    <property type="entry name" value="Plant_O-MeTrfase_dimerisation"/>
</dbReference>
<dbReference type="InterPro" id="IPR029063">
    <property type="entry name" value="SAM-dependent_MTases_sf"/>
</dbReference>
<dbReference type="InterPro" id="IPR036388">
    <property type="entry name" value="WH-like_DNA-bd_sf"/>
</dbReference>
<dbReference type="InterPro" id="IPR036390">
    <property type="entry name" value="WH_DNA-bd_sf"/>
</dbReference>
<dbReference type="PANTHER" id="PTHR43712:SF2">
    <property type="entry name" value="O-METHYLTRANSFERASE CICE"/>
    <property type="match status" value="1"/>
</dbReference>
<dbReference type="PANTHER" id="PTHR43712">
    <property type="entry name" value="PUTATIVE (AFU_ORTHOLOGUE AFUA_4G14580)-RELATED"/>
    <property type="match status" value="1"/>
</dbReference>
<dbReference type="Pfam" id="PF08100">
    <property type="entry name" value="Dimerisation"/>
    <property type="match status" value="1"/>
</dbReference>
<dbReference type="Pfam" id="PF00891">
    <property type="entry name" value="Methyltransf_2"/>
    <property type="match status" value="1"/>
</dbReference>
<dbReference type="SUPFAM" id="SSF53335">
    <property type="entry name" value="S-adenosyl-L-methionine-dependent methyltransferases"/>
    <property type="match status" value="1"/>
</dbReference>
<dbReference type="SUPFAM" id="SSF46785">
    <property type="entry name" value="Winged helix' DNA-binding domain"/>
    <property type="match status" value="1"/>
</dbReference>
<dbReference type="PROSITE" id="PS51683">
    <property type="entry name" value="SAM_OMT_II"/>
    <property type="match status" value="1"/>
</dbReference>
<sequence>MDAPLTDAERTALQTSLEALNRQVEATRNILRSNSQKALLQTLHTDQELPDPALEALAGKTINLLHETQQLLEPGHLVLADHFLGYVSTKCLCAAVELKLVDILADADEAGMTVDELADASGAHPDRLQQVLRVLRNDNIFDYDAVSHRYRNNRVSALLHSEHWTQWHNWVDLYGNEFYDIARGIPRSIRREEARWAAQINFDTNDDMFTYFQAQGWLPRLHRTLGGGAIAQAPGIVADYPWHEIGSRTVLDVGGGGGGFLASLLREYPQMRGGILDLPRTIEHACTLFHEPQGPYFDLRERVPRENLIAGDFLKAVPAFEIYTMKWVLHDWKDPDVLTILRCIRASLIPGPDSRLVILESNLSDGQMGRLSRYGDINMMMTANGQERSEEQWRALAAASGWEVSRIYPMRRAWVCAIDLRPSASESGDRKHS</sequence>
<gene>
    <name evidence="4" type="primary">aclM</name>
    <name type="ORF">AO090001000039</name>
</gene>
<comment type="function">
    <text evidence="3">O-methyltransferase; part of the gene cluster that mediates the biosynthesis of aspirochlorine (or antibiotic A30641), an unusual halogenated spiro compound with distinctive antifungal properties due to selective inhibition of protein biosynthesis, and which is also active against bacteria, viruses, and murine tumor cells (PubMed:25302411). The non-ribosomal peptide synthetase (NRPS) aclP is responsible the formation of the diketopiperazine (DKP) core from the condensation of 2 phenylalanine residues (PubMed:25302411). One Phe residue is tailored into chlorotyrosine by hydroxylation and chlorination, whereas the second Phe undergoes an unprecedented C-C bond cleavage to be converted into glycine (PubMed:25302411). After formation of the DKP, sulfur is incorporated into the DKP by conjugation with glutathione by aclG, followed by its stepwise degradation to the thiol by aclI, aclJ and aclK, and the dithiol oxidation by aclT (PubMed:25302411). In addition, oxygenases (aclB, aclC, aclL and aclO) and O-methyltransferases (aclM and aclU) act as tailoring enzymes to produce the intermediate dechloroaspirochlorine (PubMed:25302411). Ultimately, chlorination of dechloroaspirochlorine by the halogenase aclH is the last step in the aspirochlorine pathway (PubMed:25302411).</text>
</comment>
<comment type="pathway">
    <text evidence="5">Mycotoxin biosynthesis.</text>
</comment>
<comment type="similarity">
    <text evidence="2">Belongs to the class I-like SAM-binding methyltransferase superfamily. Cation-independent O-methyltransferase family. COMT subfamily.</text>
</comment>
<proteinExistence type="inferred from homology"/>
<accession>Q2UPB3</accession>
<organism>
    <name type="scientific">Aspergillus oryzae (strain ATCC 42149 / RIB 40)</name>
    <name type="common">Yellow koji mold</name>
    <dbReference type="NCBI Taxonomy" id="510516"/>
    <lineage>
        <taxon>Eukaryota</taxon>
        <taxon>Fungi</taxon>
        <taxon>Dikarya</taxon>
        <taxon>Ascomycota</taxon>
        <taxon>Pezizomycotina</taxon>
        <taxon>Eurotiomycetes</taxon>
        <taxon>Eurotiomycetidae</taxon>
        <taxon>Eurotiales</taxon>
        <taxon>Aspergillaceae</taxon>
        <taxon>Aspergillus</taxon>
        <taxon>Aspergillus subgen. Circumdati</taxon>
    </lineage>
</organism>
<protein>
    <recommendedName>
        <fullName evidence="4">O-methyltransferase aclM</fullName>
        <ecNumber evidence="2">2.1.1.-</ecNumber>
    </recommendedName>
    <alternativeName>
        <fullName evidence="4">Aspitochlorine biosynthesis protein M</fullName>
    </alternativeName>
</protein>
<reference key="1">
    <citation type="journal article" date="2005" name="Nature">
        <title>Genome sequencing and analysis of Aspergillus oryzae.</title>
        <authorList>
            <person name="Machida M."/>
            <person name="Asai K."/>
            <person name="Sano M."/>
            <person name="Tanaka T."/>
            <person name="Kumagai T."/>
            <person name="Terai G."/>
            <person name="Kusumoto K."/>
            <person name="Arima T."/>
            <person name="Akita O."/>
            <person name="Kashiwagi Y."/>
            <person name="Abe K."/>
            <person name="Gomi K."/>
            <person name="Horiuchi H."/>
            <person name="Kitamoto K."/>
            <person name="Kobayashi T."/>
            <person name="Takeuchi M."/>
            <person name="Denning D.W."/>
            <person name="Galagan J.E."/>
            <person name="Nierman W.C."/>
            <person name="Yu J."/>
            <person name="Archer D.B."/>
            <person name="Bennett J.W."/>
            <person name="Bhatnagar D."/>
            <person name="Cleveland T.E."/>
            <person name="Fedorova N.D."/>
            <person name="Gotoh O."/>
            <person name="Horikawa H."/>
            <person name="Hosoyama A."/>
            <person name="Ichinomiya M."/>
            <person name="Igarashi R."/>
            <person name="Iwashita K."/>
            <person name="Juvvadi P.R."/>
            <person name="Kato M."/>
            <person name="Kato Y."/>
            <person name="Kin T."/>
            <person name="Kokubun A."/>
            <person name="Maeda H."/>
            <person name="Maeyama N."/>
            <person name="Maruyama J."/>
            <person name="Nagasaki H."/>
            <person name="Nakajima T."/>
            <person name="Oda K."/>
            <person name="Okada K."/>
            <person name="Paulsen I."/>
            <person name="Sakamoto K."/>
            <person name="Sawano T."/>
            <person name="Takahashi M."/>
            <person name="Takase K."/>
            <person name="Terabayashi Y."/>
            <person name="Wortman J.R."/>
            <person name="Yamada O."/>
            <person name="Yamagata Y."/>
            <person name="Anazawa H."/>
            <person name="Hata Y."/>
            <person name="Koide Y."/>
            <person name="Komori T."/>
            <person name="Koyama Y."/>
            <person name="Minetoki T."/>
            <person name="Suharnan S."/>
            <person name="Tanaka A."/>
            <person name="Isono K."/>
            <person name="Kuhara S."/>
            <person name="Ogasawara N."/>
            <person name="Kikuchi H."/>
        </authorList>
    </citation>
    <scope>NUCLEOTIDE SEQUENCE [LARGE SCALE GENOMIC DNA]</scope>
    <source>
        <strain>ATCC 42149 / RIB 40</strain>
    </source>
</reference>
<reference key="2">
    <citation type="journal article" date="2014" name="Angew. Chem. Int. Ed.">
        <title>Biosynthesis of the halogenated mycotoxin aspirochlorine in koji mold involves a cryptic amino acid conversion.</title>
        <authorList>
            <person name="Chankhamjon P."/>
            <person name="Boettger-Schmidt D."/>
            <person name="Scherlach K."/>
            <person name="Urbansky B."/>
            <person name="Lackner G."/>
            <person name="Kalb D."/>
            <person name="Dahse H.M."/>
            <person name="Hoffmeister D."/>
            <person name="Hertweck C."/>
        </authorList>
    </citation>
    <scope>FUNCTION</scope>
    <scope>PATHWAY</scope>
</reference>
<evidence type="ECO:0000255" key="1"/>
<evidence type="ECO:0000255" key="2">
    <source>
        <dbReference type="PROSITE-ProRule" id="PRU01020"/>
    </source>
</evidence>
<evidence type="ECO:0000269" key="3">
    <source>
    </source>
</evidence>
<evidence type="ECO:0000303" key="4">
    <source>
    </source>
</evidence>
<evidence type="ECO:0000305" key="5">
    <source>
    </source>
</evidence>
<name>ACLM_ASPOR</name>